<comment type="function">
    <text evidence="1">Catalyzes the 2-thiolation of uridine at the wobble position (U34) of tRNA, leading to the formation of s(2)U34.</text>
</comment>
<comment type="catalytic activity">
    <reaction evidence="1">
        <text>S-sulfanyl-L-cysteinyl-[protein] + uridine(34) in tRNA + AH2 + ATP = 2-thiouridine(34) in tRNA + L-cysteinyl-[protein] + A + AMP + diphosphate + H(+)</text>
        <dbReference type="Rhea" id="RHEA:47032"/>
        <dbReference type="Rhea" id="RHEA-COMP:10131"/>
        <dbReference type="Rhea" id="RHEA-COMP:11726"/>
        <dbReference type="Rhea" id="RHEA-COMP:11727"/>
        <dbReference type="Rhea" id="RHEA-COMP:11728"/>
        <dbReference type="ChEBI" id="CHEBI:13193"/>
        <dbReference type="ChEBI" id="CHEBI:15378"/>
        <dbReference type="ChEBI" id="CHEBI:17499"/>
        <dbReference type="ChEBI" id="CHEBI:29950"/>
        <dbReference type="ChEBI" id="CHEBI:30616"/>
        <dbReference type="ChEBI" id="CHEBI:33019"/>
        <dbReference type="ChEBI" id="CHEBI:61963"/>
        <dbReference type="ChEBI" id="CHEBI:65315"/>
        <dbReference type="ChEBI" id="CHEBI:87170"/>
        <dbReference type="ChEBI" id="CHEBI:456215"/>
        <dbReference type="EC" id="2.8.1.13"/>
    </reaction>
</comment>
<comment type="subcellular location">
    <subcellularLocation>
        <location evidence="1">Cytoplasm</location>
    </subcellularLocation>
</comment>
<comment type="similarity">
    <text evidence="1">Belongs to the MnmA/TRMU family.</text>
</comment>
<sequence length="365" mass="40858">MSKKTVVVGLSGGVDSSVAALLLKQQGWNVIGLFMKNWEDDDTEEYCSSRQDLIDVMSVADKIGIDVEVVNFAAEYRERVFAEFLSEYQAGRTPNPDILCNSEIKFKAFLDHAMQLGAEKIATGHYAGVREFDGKFQLLKAEDGTKDQSYFLYRLNQAQLSKTLFPLADIYKRDVRKIAEAEGLHVAAKKDSTGICFIGERPFKDFLSRYLPPKKGEIRRLDDGKVMGEHDGLMFHTMGQRKGLHIGGIKEKGHPGGGDHDAWFVAGKDMEKNVLYVVQGHDHPALLKGDLVAEQLSWVSGNEPHTHWVYTAKPRYRTSDQPCEVERVDAESCEIRFAEPQWALTPGQSVVLYESRVCLGGGVIR</sequence>
<protein>
    <recommendedName>
        <fullName evidence="1">tRNA-specific 2-thiouridylase MnmA</fullName>
        <ecNumber evidence="1">2.8.1.13</ecNumber>
    </recommendedName>
</protein>
<feature type="chain" id="PRO_0000349605" description="tRNA-specific 2-thiouridylase MnmA">
    <location>
        <begin position="1"/>
        <end position="365"/>
    </location>
</feature>
<feature type="region of interest" description="Interaction with target base in tRNA" evidence="1">
    <location>
        <begin position="95"/>
        <end position="97"/>
    </location>
</feature>
<feature type="region of interest" description="Interaction with tRNA" evidence="1">
    <location>
        <begin position="146"/>
        <end position="148"/>
    </location>
</feature>
<feature type="region of interest" description="Interaction with tRNA" evidence="1">
    <location>
        <begin position="315"/>
        <end position="316"/>
    </location>
</feature>
<feature type="active site" description="Nucleophile" evidence="1">
    <location>
        <position position="100"/>
    </location>
</feature>
<feature type="active site" description="Cysteine persulfide intermediate" evidence="1">
    <location>
        <position position="196"/>
    </location>
</feature>
<feature type="binding site" evidence="1">
    <location>
        <begin position="9"/>
        <end position="16"/>
    </location>
    <ligand>
        <name>ATP</name>
        <dbReference type="ChEBI" id="CHEBI:30616"/>
    </ligand>
</feature>
<feature type="binding site" evidence="1">
    <location>
        <position position="35"/>
    </location>
    <ligand>
        <name>ATP</name>
        <dbReference type="ChEBI" id="CHEBI:30616"/>
    </ligand>
</feature>
<feature type="binding site" evidence="1">
    <location>
        <position position="124"/>
    </location>
    <ligand>
        <name>ATP</name>
        <dbReference type="ChEBI" id="CHEBI:30616"/>
    </ligand>
</feature>
<feature type="site" description="Interaction with tRNA" evidence="1">
    <location>
        <position position="125"/>
    </location>
</feature>
<feature type="site" description="Interaction with tRNA" evidence="1">
    <location>
        <position position="348"/>
    </location>
</feature>
<feature type="disulfide bond" description="Alternate" evidence="1">
    <location>
        <begin position="100"/>
        <end position="196"/>
    </location>
</feature>
<proteinExistence type="inferred from homology"/>
<accession>Q47AW0</accession>
<reference key="1">
    <citation type="journal article" date="2009" name="BMC Genomics">
        <title>Metabolic analysis of the soil microbe Dechloromonas aromatica str. RCB: indications of a surprisingly complex life-style and cryptic anaerobic pathways for aromatic degradation.</title>
        <authorList>
            <person name="Salinero K.K."/>
            <person name="Keller K."/>
            <person name="Feil W.S."/>
            <person name="Feil H."/>
            <person name="Trong S."/>
            <person name="Di Bartolo G."/>
            <person name="Lapidus A."/>
        </authorList>
    </citation>
    <scope>NUCLEOTIDE SEQUENCE [LARGE SCALE GENOMIC DNA]</scope>
    <source>
        <strain>RCB</strain>
    </source>
</reference>
<evidence type="ECO:0000255" key="1">
    <source>
        <dbReference type="HAMAP-Rule" id="MF_00144"/>
    </source>
</evidence>
<organism>
    <name type="scientific">Dechloromonas aromatica (strain RCB)</name>
    <dbReference type="NCBI Taxonomy" id="159087"/>
    <lineage>
        <taxon>Bacteria</taxon>
        <taxon>Pseudomonadati</taxon>
        <taxon>Pseudomonadota</taxon>
        <taxon>Betaproteobacteria</taxon>
        <taxon>Rhodocyclales</taxon>
        <taxon>Azonexaceae</taxon>
        <taxon>Dechloromonas</taxon>
    </lineage>
</organism>
<dbReference type="EC" id="2.8.1.13" evidence="1"/>
<dbReference type="EMBL" id="CP000089">
    <property type="protein sequence ID" value="AAZ48021.1"/>
    <property type="molecule type" value="Genomic_DNA"/>
</dbReference>
<dbReference type="SMR" id="Q47AW0"/>
<dbReference type="STRING" id="159087.Daro_3291"/>
<dbReference type="KEGG" id="dar:Daro_3291"/>
<dbReference type="eggNOG" id="COG0482">
    <property type="taxonomic scope" value="Bacteria"/>
</dbReference>
<dbReference type="HOGENOM" id="CLU_035188_1_0_4"/>
<dbReference type="OrthoDB" id="9800696at2"/>
<dbReference type="GO" id="GO:0005737">
    <property type="term" value="C:cytoplasm"/>
    <property type="evidence" value="ECO:0007669"/>
    <property type="project" value="UniProtKB-SubCell"/>
</dbReference>
<dbReference type="GO" id="GO:0005524">
    <property type="term" value="F:ATP binding"/>
    <property type="evidence" value="ECO:0007669"/>
    <property type="project" value="UniProtKB-KW"/>
</dbReference>
<dbReference type="GO" id="GO:0000049">
    <property type="term" value="F:tRNA binding"/>
    <property type="evidence" value="ECO:0007669"/>
    <property type="project" value="UniProtKB-KW"/>
</dbReference>
<dbReference type="GO" id="GO:0103016">
    <property type="term" value="F:tRNA-uridine 2-sulfurtransferase activity"/>
    <property type="evidence" value="ECO:0007669"/>
    <property type="project" value="UniProtKB-EC"/>
</dbReference>
<dbReference type="GO" id="GO:0002143">
    <property type="term" value="P:tRNA wobble position uridine thiolation"/>
    <property type="evidence" value="ECO:0007669"/>
    <property type="project" value="TreeGrafter"/>
</dbReference>
<dbReference type="CDD" id="cd01998">
    <property type="entry name" value="MnmA_TRMU-like"/>
    <property type="match status" value="1"/>
</dbReference>
<dbReference type="FunFam" id="2.30.30.280:FF:000001">
    <property type="entry name" value="tRNA-specific 2-thiouridylase MnmA"/>
    <property type="match status" value="1"/>
</dbReference>
<dbReference type="FunFam" id="2.40.30.10:FF:000023">
    <property type="entry name" value="tRNA-specific 2-thiouridylase MnmA"/>
    <property type="match status" value="1"/>
</dbReference>
<dbReference type="FunFam" id="3.40.50.620:FF:000004">
    <property type="entry name" value="tRNA-specific 2-thiouridylase MnmA"/>
    <property type="match status" value="1"/>
</dbReference>
<dbReference type="Gene3D" id="2.30.30.280">
    <property type="entry name" value="Adenine nucleotide alpha hydrolases-like domains"/>
    <property type="match status" value="1"/>
</dbReference>
<dbReference type="Gene3D" id="3.40.50.620">
    <property type="entry name" value="HUPs"/>
    <property type="match status" value="1"/>
</dbReference>
<dbReference type="Gene3D" id="2.40.30.10">
    <property type="entry name" value="Translation factors"/>
    <property type="match status" value="1"/>
</dbReference>
<dbReference type="HAMAP" id="MF_00144">
    <property type="entry name" value="tRNA_thiouridyl_MnmA"/>
    <property type="match status" value="1"/>
</dbReference>
<dbReference type="InterPro" id="IPR004506">
    <property type="entry name" value="MnmA-like"/>
</dbReference>
<dbReference type="InterPro" id="IPR046885">
    <property type="entry name" value="MnmA-like_C"/>
</dbReference>
<dbReference type="InterPro" id="IPR046884">
    <property type="entry name" value="MnmA-like_central"/>
</dbReference>
<dbReference type="InterPro" id="IPR023382">
    <property type="entry name" value="MnmA-like_central_sf"/>
</dbReference>
<dbReference type="InterPro" id="IPR014729">
    <property type="entry name" value="Rossmann-like_a/b/a_fold"/>
</dbReference>
<dbReference type="NCBIfam" id="NF001138">
    <property type="entry name" value="PRK00143.1"/>
    <property type="match status" value="1"/>
</dbReference>
<dbReference type="NCBIfam" id="TIGR00420">
    <property type="entry name" value="trmU"/>
    <property type="match status" value="1"/>
</dbReference>
<dbReference type="PANTHER" id="PTHR11933:SF5">
    <property type="entry name" value="MITOCHONDRIAL TRNA-SPECIFIC 2-THIOURIDYLASE 1"/>
    <property type="match status" value="1"/>
</dbReference>
<dbReference type="PANTHER" id="PTHR11933">
    <property type="entry name" value="TRNA 5-METHYLAMINOMETHYL-2-THIOURIDYLATE -METHYLTRANSFERASE"/>
    <property type="match status" value="1"/>
</dbReference>
<dbReference type="Pfam" id="PF03054">
    <property type="entry name" value="tRNA_Me_trans"/>
    <property type="match status" value="1"/>
</dbReference>
<dbReference type="Pfam" id="PF20258">
    <property type="entry name" value="tRNA_Me_trans_C"/>
    <property type="match status" value="1"/>
</dbReference>
<dbReference type="Pfam" id="PF20259">
    <property type="entry name" value="tRNA_Me_trans_M"/>
    <property type="match status" value="1"/>
</dbReference>
<dbReference type="SUPFAM" id="SSF52402">
    <property type="entry name" value="Adenine nucleotide alpha hydrolases-like"/>
    <property type="match status" value="1"/>
</dbReference>
<gene>
    <name evidence="1" type="primary">mnmA</name>
    <name type="ordered locus">Daro_3291</name>
</gene>
<name>MNMA_DECAR</name>
<keyword id="KW-0067">ATP-binding</keyword>
<keyword id="KW-0963">Cytoplasm</keyword>
<keyword id="KW-1015">Disulfide bond</keyword>
<keyword id="KW-0547">Nucleotide-binding</keyword>
<keyword id="KW-0694">RNA-binding</keyword>
<keyword id="KW-0808">Transferase</keyword>
<keyword id="KW-0819">tRNA processing</keyword>
<keyword id="KW-0820">tRNA-binding</keyword>